<evidence type="ECO:0000255" key="1">
    <source>
        <dbReference type="HAMAP-Rule" id="MF_01875"/>
    </source>
</evidence>
<evidence type="ECO:0000256" key="2">
    <source>
        <dbReference type="SAM" id="MobiDB-lite"/>
    </source>
</evidence>
<sequence>MRAIWTGAITFGLVNVPVKVYSATEDHDVPLQPLHAADGGRIRYQRRCEIDGKVIPYEDIARAYDDGERMVVLTPEDLASLPAERSREIDVVEFVPDEQLDPLTFDRSYYLEPDSRSVKAYALLRTTLEDGCRTAIVTVALRQKTRLGALRVRGNLLVLQTLLWHDEIRAAAFPSLETVPPITERELALSSALMESFAGDFQPETFADEYQEELRKLIAAKIEQGESVDVAETFGEGAAPAGGGAVIDLMEALQRSVERSGGKAASAFPAAEKAPAGKNAATASAKKARKLA</sequence>
<feature type="chain" id="PRO_0000389189" description="Non-homologous end joining protein Ku">
    <location>
        <begin position="1"/>
        <end position="292"/>
    </location>
</feature>
<feature type="domain" description="Ku" evidence="1">
    <location>
        <begin position="9"/>
        <end position="187"/>
    </location>
</feature>
<feature type="region of interest" description="Disordered" evidence="2">
    <location>
        <begin position="264"/>
        <end position="292"/>
    </location>
</feature>
<feature type="compositionally biased region" description="Low complexity" evidence="2">
    <location>
        <begin position="264"/>
        <end position="285"/>
    </location>
</feature>
<keyword id="KW-0227">DNA damage</keyword>
<keyword id="KW-0233">DNA recombination</keyword>
<keyword id="KW-0234">DNA repair</keyword>
<keyword id="KW-0238">DNA-binding</keyword>
<keyword id="KW-1185">Reference proteome</keyword>
<accession>Q6AE23</accession>
<dbReference type="EMBL" id="AE016822">
    <property type="protein sequence ID" value="AAT89373.1"/>
    <property type="molecule type" value="Genomic_DNA"/>
</dbReference>
<dbReference type="RefSeq" id="WP_011186363.1">
    <property type="nucleotide sequence ID" value="NC_006087.1"/>
</dbReference>
<dbReference type="SMR" id="Q6AE23"/>
<dbReference type="KEGG" id="lxx:Lxx15680"/>
<dbReference type="eggNOG" id="COG1273">
    <property type="taxonomic scope" value="Bacteria"/>
</dbReference>
<dbReference type="HOGENOM" id="CLU_048975_1_1_11"/>
<dbReference type="Proteomes" id="UP000001306">
    <property type="component" value="Chromosome"/>
</dbReference>
<dbReference type="GO" id="GO:0003690">
    <property type="term" value="F:double-stranded DNA binding"/>
    <property type="evidence" value="ECO:0007669"/>
    <property type="project" value="UniProtKB-UniRule"/>
</dbReference>
<dbReference type="GO" id="GO:0006310">
    <property type="term" value="P:DNA recombination"/>
    <property type="evidence" value="ECO:0007669"/>
    <property type="project" value="UniProtKB-KW"/>
</dbReference>
<dbReference type="GO" id="GO:0006303">
    <property type="term" value="P:double-strand break repair via nonhomologous end joining"/>
    <property type="evidence" value="ECO:0007669"/>
    <property type="project" value="UniProtKB-UniRule"/>
</dbReference>
<dbReference type="CDD" id="cd00789">
    <property type="entry name" value="KU_like"/>
    <property type="match status" value="1"/>
</dbReference>
<dbReference type="FunFam" id="2.40.290.10:FF:000004">
    <property type="entry name" value="Non-homologous end joining protein Ku"/>
    <property type="match status" value="1"/>
</dbReference>
<dbReference type="Gene3D" id="2.40.290.10">
    <property type="match status" value="1"/>
</dbReference>
<dbReference type="HAMAP" id="MF_01875">
    <property type="entry name" value="Prokaryotic_Ku"/>
    <property type="match status" value="1"/>
</dbReference>
<dbReference type="InterPro" id="IPR006164">
    <property type="entry name" value="Ku70/Ku80_beta-barrel_dom"/>
</dbReference>
<dbReference type="InterPro" id="IPR009187">
    <property type="entry name" value="Prok_Ku"/>
</dbReference>
<dbReference type="InterPro" id="IPR016194">
    <property type="entry name" value="SPOC-like_C_dom_sf"/>
</dbReference>
<dbReference type="NCBIfam" id="TIGR02772">
    <property type="entry name" value="Ku_bact"/>
    <property type="match status" value="1"/>
</dbReference>
<dbReference type="PANTHER" id="PTHR41251">
    <property type="entry name" value="NON-HOMOLOGOUS END JOINING PROTEIN KU"/>
    <property type="match status" value="1"/>
</dbReference>
<dbReference type="PANTHER" id="PTHR41251:SF1">
    <property type="entry name" value="NON-HOMOLOGOUS END JOINING PROTEIN KU"/>
    <property type="match status" value="1"/>
</dbReference>
<dbReference type="Pfam" id="PF02735">
    <property type="entry name" value="Ku"/>
    <property type="match status" value="1"/>
</dbReference>
<dbReference type="PIRSF" id="PIRSF006493">
    <property type="entry name" value="Prok_Ku"/>
    <property type="match status" value="1"/>
</dbReference>
<dbReference type="SMART" id="SM00559">
    <property type="entry name" value="Ku78"/>
    <property type="match status" value="1"/>
</dbReference>
<dbReference type="SUPFAM" id="SSF100939">
    <property type="entry name" value="SPOC domain-like"/>
    <property type="match status" value="1"/>
</dbReference>
<organism>
    <name type="scientific">Leifsonia xyli subsp. xyli (strain CTCB07)</name>
    <dbReference type="NCBI Taxonomy" id="281090"/>
    <lineage>
        <taxon>Bacteria</taxon>
        <taxon>Bacillati</taxon>
        <taxon>Actinomycetota</taxon>
        <taxon>Actinomycetes</taxon>
        <taxon>Micrococcales</taxon>
        <taxon>Microbacteriaceae</taxon>
        <taxon>Leifsonia</taxon>
    </lineage>
</organism>
<name>KU_LEIXX</name>
<reference key="1">
    <citation type="journal article" date="2004" name="Mol. Plant Microbe Interact.">
        <title>The genome sequence of the Gram-positive sugarcane pathogen Leifsonia xyli subsp. xyli.</title>
        <authorList>
            <person name="Monteiro-Vitorello C.B."/>
            <person name="Camargo L.E.A."/>
            <person name="Van Sluys M.A."/>
            <person name="Kitajima J.P."/>
            <person name="Truffi D."/>
            <person name="do Amaral A.M."/>
            <person name="Harakava R."/>
            <person name="de Oliveira J.C.F."/>
            <person name="Wood D."/>
            <person name="de Oliveira M.C."/>
            <person name="Miyaki C.Y."/>
            <person name="Takita M.A."/>
            <person name="da Silva A.C.R."/>
            <person name="Furlan L.R."/>
            <person name="Carraro D.M."/>
            <person name="Camarotte G."/>
            <person name="Almeida N.F. Jr."/>
            <person name="Carrer H."/>
            <person name="Coutinho L.L."/>
            <person name="El-Dorry H.A."/>
            <person name="Ferro M.I.T."/>
            <person name="Gagliardi P.R."/>
            <person name="Giglioti E."/>
            <person name="Goldman M.H.S."/>
            <person name="Goldman G.H."/>
            <person name="Kimura E.T."/>
            <person name="Ferro E.S."/>
            <person name="Kuramae E.E."/>
            <person name="Lemos E.G.M."/>
            <person name="Lemos M.V.F."/>
            <person name="Mauro S.M.Z."/>
            <person name="Machado M.A."/>
            <person name="Marino C.L."/>
            <person name="Menck C.F."/>
            <person name="Nunes L.R."/>
            <person name="Oliveira R.C."/>
            <person name="Pereira G.G."/>
            <person name="Siqueira W."/>
            <person name="de Souza A.A."/>
            <person name="Tsai S.M."/>
            <person name="Zanca A.S."/>
            <person name="Simpson A.J.G."/>
            <person name="Brumbley S.M."/>
            <person name="Setubal J.C."/>
        </authorList>
    </citation>
    <scope>NUCLEOTIDE SEQUENCE [LARGE SCALE GENOMIC DNA]</scope>
    <source>
        <strain>CTCB07</strain>
    </source>
</reference>
<gene>
    <name evidence="1" type="primary">ku</name>
    <name type="ordered locus">Lxx15680</name>
</gene>
<protein>
    <recommendedName>
        <fullName evidence="1">Non-homologous end joining protein Ku</fullName>
    </recommendedName>
</protein>
<comment type="function">
    <text evidence="1">With LigD forms a non-homologous end joining (NHEJ) DNA repair enzyme, which repairs dsDNA breaks with reduced fidelity. Binds linear dsDNA with 5'- and 3'- overhangs but not closed circular dsDNA nor ssDNA. Recruits and stimulates the ligase activity of LigD.</text>
</comment>
<comment type="subunit">
    <text evidence="1">Homodimer. Interacts with LigD.</text>
</comment>
<comment type="similarity">
    <text evidence="1">Belongs to the prokaryotic Ku family.</text>
</comment>
<proteinExistence type="inferred from homology"/>